<organism>
    <name type="scientific">Methylorubrum extorquens (strain PA1)</name>
    <name type="common">Methylobacterium extorquens</name>
    <dbReference type="NCBI Taxonomy" id="419610"/>
    <lineage>
        <taxon>Bacteria</taxon>
        <taxon>Pseudomonadati</taxon>
        <taxon>Pseudomonadota</taxon>
        <taxon>Alphaproteobacteria</taxon>
        <taxon>Hyphomicrobiales</taxon>
        <taxon>Methylobacteriaceae</taxon>
        <taxon>Methylorubrum</taxon>
    </lineage>
</organism>
<protein>
    <recommendedName>
        <fullName evidence="1">Urease accessory protein UreD 1</fullName>
    </recommendedName>
</protein>
<comment type="function">
    <text evidence="1">Required for maturation of urease via the functional incorporation of the urease nickel metallocenter.</text>
</comment>
<comment type="subunit">
    <text evidence="1">UreD, UreF and UreG form a complex that acts as a GTP-hydrolysis-dependent molecular chaperone, activating the urease apoprotein by helping to assemble the nickel containing metallocenter of UreC. The UreE protein probably delivers the nickel.</text>
</comment>
<comment type="subcellular location">
    <subcellularLocation>
        <location evidence="1">Cytoplasm</location>
    </subcellularLocation>
</comment>
<comment type="similarity">
    <text evidence="1">Belongs to the UreD family.</text>
</comment>
<proteinExistence type="inferred from homology"/>
<name>URED1_METEP</name>
<sequence>MALSLDGLPEKPAPAEAPSPPVGRRVQASLVFARGGRTTVLSRQVVPYPFHITRAFRMHPESPDLATLYLQSASGGLYAADHLTLAIAARAGARAHVTTQAGTVVHRGGPEPSRQETRLTIAADAFLALNPDPLILFPGAHLAVSTEITAEPGARAIVTESVACHDPVGEGRPFDRLDLGLTIRDPEGRALVRERSRIDGRAFTAPDSPMGPHRAYGTMVVLGAPDDARLAGLHLRQAADAAGCLTGVSPLPNGAGLGLRLLAPDGGTLSAGMDAVFRIVFETLSGCAPGRRRK</sequence>
<gene>
    <name evidence="1" type="primary">ureD1</name>
    <name type="ordered locus">Mext_1199</name>
</gene>
<accession>A9W1Z5</accession>
<dbReference type="EMBL" id="CP000908">
    <property type="protein sequence ID" value="ABY29601.1"/>
    <property type="molecule type" value="Genomic_DNA"/>
</dbReference>
<dbReference type="RefSeq" id="WP_012252855.1">
    <property type="nucleotide sequence ID" value="NC_010172.1"/>
</dbReference>
<dbReference type="SMR" id="A9W1Z5"/>
<dbReference type="KEGG" id="mex:Mext_1199"/>
<dbReference type="eggNOG" id="COG0829">
    <property type="taxonomic scope" value="Bacteria"/>
</dbReference>
<dbReference type="HOGENOM" id="CLU_056339_1_1_5"/>
<dbReference type="BioCyc" id="MEXT419610:MEXT_RS06035-MONOMER"/>
<dbReference type="GO" id="GO:0005737">
    <property type="term" value="C:cytoplasm"/>
    <property type="evidence" value="ECO:0007669"/>
    <property type="project" value="UniProtKB-SubCell"/>
</dbReference>
<dbReference type="GO" id="GO:0016151">
    <property type="term" value="F:nickel cation binding"/>
    <property type="evidence" value="ECO:0007669"/>
    <property type="project" value="UniProtKB-UniRule"/>
</dbReference>
<dbReference type="HAMAP" id="MF_01384">
    <property type="entry name" value="UreD"/>
    <property type="match status" value="1"/>
</dbReference>
<dbReference type="InterPro" id="IPR002669">
    <property type="entry name" value="UreD"/>
</dbReference>
<dbReference type="PANTHER" id="PTHR33643">
    <property type="entry name" value="UREASE ACCESSORY PROTEIN D"/>
    <property type="match status" value="1"/>
</dbReference>
<dbReference type="PANTHER" id="PTHR33643:SF1">
    <property type="entry name" value="UREASE ACCESSORY PROTEIN D"/>
    <property type="match status" value="1"/>
</dbReference>
<dbReference type="Pfam" id="PF01774">
    <property type="entry name" value="UreD"/>
    <property type="match status" value="1"/>
</dbReference>
<feature type="chain" id="PRO_0000346572" description="Urease accessory protein UreD 1">
    <location>
        <begin position="1"/>
        <end position="294"/>
    </location>
</feature>
<feature type="region of interest" description="Disordered" evidence="2">
    <location>
        <begin position="1"/>
        <end position="22"/>
    </location>
</feature>
<feature type="compositionally biased region" description="Pro residues" evidence="2">
    <location>
        <begin position="11"/>
        <end position="21"/>
    </location>
</feature>
<keyword id="KW-0143">Chaperone</keyword>
<keyword id="KW-0963">Cytoplasm</keyword>
<keyword id="KW-0996">Nickel insertion</keyword>
<evidence type="ECO:0000255" key="1">
    <source>
        <dbReference type="HAMAP-Rule" id="MF_01384"/>
    </source>
</evidence>
<evidence type="ECO:0000256" key="2">
    <source>
        <dbReference type="SAM" id="MobiDB-lite"/>
    </source>
</evidence>
<reference key="1">
    <citation type="submission" date="2007-12" db="EMBL/GenBank/DDBJ databases">
        <title>Complete sequence of Methylobacterium extorquens PA1.</title>
        <authorList>
            <consortium name="US DOE Joint Genome Institute"/>
            <person name="Copeland A."/>
            <person name="Lucas S."/>
            <person name="Lapidus A."/>
            <person name="Barry K."/>
            <person name="Glavina del Rio T."/>
            <person name="Dalin E."/>
            <person name="Tice H."/>
            <person name="Pitluck S."/>
            <person name="Saunders E."/>
            <person name="Brettin T."/>
            <person name="Bruce D."/>
            <person name="Detter J.C."/>
            <person name="Han C."/>
            <person name="Schmutz J."/>
            <person name="Larimer F."/>
            <person name="Land M."/>
            <person name="Hauser L."/>
            <person name="Kyrpides N."/>
            <person name="Kim E."/>
            <person name="Marx C."/>
            <person name="Richardson P."/>
        </authorList>
    </citation>
    <scope>NUCLEOTIDE SEQUENCE [LARGE SCALE GENOMIC DNA]</scope>
    <source>
        <strain>PA1</strain>
    </source>
</reference>